<organism>
    <name type="scientific">Salmonella paratyphi B (strain ATCC BAA-1250 / SPB7)</name>
    <dbReference type="NCBI Taxonomy" id="1016998"/>
    <lineage>
        <taxon>Bacteria</taxon>
        <taxon>Pseudomonadati</taxon>
        <taxon>Pseudomonadota</taxon>
        <taxon>Gammaproteobacteria</taxon>
        <taxon>Enterobacterales</taxon>
        <taxon>Enterobacteriaceae</taxon>
        <taxon>Salmonella</taxon>
    </lineage>
</organism>
<keyword id="KW-0997">Cell inner membrane</keyword>
<keyword id="KW-1003">Cell membrane</keyword>
<keyword id="KW-0472">Membrane</keyword>
<keyword id="KW-0520">NAD</keyword>
<keyword id="KW-0874">Quinone</keyword>
<keyword id="KW-1278">Translocase</keyword>
<keyword id="KW-0812">Transmembrane</keyword>
<keyword id="KW-1133">Transmembrane helix</keyword>
<keyword id="KW-0813">Transport</keyword>
<keyword id="KW-0830">Ubiquinone</keyword>
<evidence type="ECO:0000255" key="1">
    <source>
        <dbReference type="HAMAP-Rule" id="MF_01394"/>
    </source>
</evidence>
<accession>A9N4C4</accession>
<comment type="function">
    <text evidence="1">NDH-1 shuttles electrons from NADH, via FMN and iron-sulfur (Fe-S) centers, to quinones in the respiratory chain. The immediate electron acceptor for the enzyme in this species is believed to be ubiquinone. Couples the redox reaction to proton translocation (for every two electrons transferred, four hydrogen ions are translocated across the cytoplasmic membrane), and thus conserves the redox energy in a proton gradient.</text>
</comment>
<comment type="catalytic activity">
    <reaction evidence="1">
        <text>a quinone + NADH + 5 H(+)(in) = a quinol + NAD(+) + 4 H(+)(out)</text>
        <dbReference type="Rhea" id="RHEA:57888"/>
        <dbReference type="ChEBI" id="CHEBI:15378"/>
        <dbReference type="ChEBI" id="CHEBI:24646"/>
        <dbReference type="ChEBI" id="CHEBI:57540"/>
        <dbReference type="ChEBI" id="CHEBI:57945"/>
        <dbReference type="ChEBI" id="CHEBI:132124"/>
    </reaction>
</comment>
<comment type="subunit">
    <text evidence="1">NDH-1 is composed of 13 different subunits. Subunits NuoA, H, J, K, L, M, N constitute the membrane sector of the complex.</text>
</comment>
<comment type="subcellular location">
    <subcellularLocation>
        <location evidence="1">Cell inner membrane</location>
        <topology evidence="1">Multi-pass membrane protein</topology>
    </subcellularLocation>
</comment>
<comment type="similarity">
    <text evidence="1">Belongs to the complex I subunit 3 family.</text>
</comment>
<sequence length="147" mass="16493">MSMSTSTEVIAHHWAFAIFLIVAIGLCCLMLVGGWFLGGRARARHKNVPFESGIDSVGTARLRLSAKFYLVAMFFVIFDVEALYLFAWSTSIRESGWVGFVEAAIFIFVLLAGLVYLARIGALDWTPARSRRERMNPETNSIANRQR</sequence>
<protein>
    <recommendedName>
        <fullName evidence="1">NADH-quinone oxidoreductase subunit A</fullName>
        <ecNumber evidence="1">7.1.1.-</ecNumber>
    </recommendedName>
    <alternativeName>
        <fullName evidence="1">NADH dehydrogenase I subunit A</fullName>
    </alternativeName>
    <alternativeName>
        <fullName evidence="1">NDH-1 subunit A</fullName>
    </alternativeName>
    <alternativeName>
        <fullName evidence="1">NUO1</fullName>
    </alternativeName>
</protein>
<reference key="1">
    <citation type="submission" date="2007-11" db="EMBL/GenBank/DDBJ databases">
        <authorList>
            <consortium name="The Salmonella enterica serovar Paratyphi B Genome Sequencing Project"/>
            <person name="McClelland M."/>
            <person name="Sanderson E.K."/>
            <person name="Porwollik S."/>
            <person name="Spieth J."/>
            <person name="Clifton W.S."/>
            <person name="Fulton R."/>
            <person name="Cordes M."/>
            <person name="Wollam A."/>
            <person name="Shah N."/>
            <person name="Pepin K."/>
            <person name="Bhonagiri V."/>
            <person name="Nash W."/>
            <person name="Johnson M."/>
            <person name="Thiruvilangam P."/>
            <person name="Wilson R."/>
        </authorList>
    </citation>
    <scope>NUCLEOTIDE SEQUENCE [LARGE SCALE GENOMIC DNA]</scope>
    <source>
        <strain>ATCC BAA-1250 / SPB7</strain>
    </source>
</reference>
<feature type="chain" id="PRO_0000362773" description="NADH-quinone oxidoreductase subunit A">
    <location>
        <begin position="1"/>
        <end position="147"/>
    </location>
</feature>
<feature type="transmembrane region" description="Helical" evidence="1">
    <location>
        <begin position="16"/>
        <end position="36"/>
    </location>
</feature>
<feature type="transmembrane region" description="Helical" evidence="1">
    <location>
        <begin position="68"/>
        <end position="88"/>
    </location>
</feature>
<feature type="transmembrane region" description="Helical" evidence="1">
    <location>
        <begin position="97"/>
        <end position="117"/>
    </location>
</feature>
<proteinExistence type="inferred from homology"/>
<name>NUOA_SALPB</name>
<gene>
    <name evidence="1" type="primary">nuoA</name>
    <name type="ordered locus">SPAB_00649</name>
</gene>
<dbReference type="EC" id="7.1.1.-" evidence="1"/>
<dbReference type="EMBL" id="CP000886">
    <property type="protein sequence ID" value="ABX66075.1"/>
    <property type="molecule type" value="Genomic_DNA"/>
</dbReference>
<dbReference type="RefSeq" id="WP_000062993.1">
    <property type="nucleotide sequence ID" value="NC_010102.1"/>
</dbReference>
<dbReference type="SMR" id="A9N4C4"/>
<dbReference type="GeneID" id="66756777"/>
<dbReference type="KEGG" id="spq:SPAB_00649"/>
<dbReference type="PATRIC" id="fig|1016998.12.peg.610"/>
<dbReference type="HOGENOM" id="CLU_119549_2_0_6"/>
<dbReference type="BioCyc" id="SENT1016998:SPAB_RS02695-MONOMER"/>
<dbReference type="Proteomes" id="UP000008556">
    <property type="component" value="Chromosome"/>
</dbReference>
<dbReference type="GO" id="GO:0030964">
    <property type="term" value="C:NADH dehydrogenase complex"/>
    <property type="evidence" value="ECO:0007669"/>
    <property type="project" value="TreeGrafter"/>
</dbReference>
<dbReference type="GO" id="GO:0005886">
    <property type="term" value="C:plasma membrane"/>
    <property type="evidence" value="ECO:0007669"/>
    <property type="project" value="UniProtKB-SubCell"/>
</dbReference>
<dbReference type="GO" id="GO:0008137">
    <property type="term" value="F:NADH dehydrogenase (ubiquinone) activity"/>
    <property type="evidence" value="ECO:0007669"/>
    <property type="project" value="InterPro"/>
</dbReference>
<dbReference type="GO" id="GO:0050136">
    <property type="term" value="F:NADH:ubiquinone reductase (non-electrogenic) activity"/>
    <property type="evidence" value="ECO:0007669"/>
    <property type="project" value="UniProtKB-UniRule"/>
</dbReference>
<dbReference type="GO" id="GO:0048038">
    <property type="term" value="F:quinone binding"/>
    <property type="evidence" value="ECO:0007669"/>
    <property type="project" value="UniProtKB-KW"/>
</dbReference>
<dbReference type="FunFam" id="1.20.58.1610:FF:000003">
    <property type="entry name" value="NADH-quinone oxidoreductase subunit A"/>
    <property type="match status" value="1"/>
</dbReference>
<dbReference type="Gene3D" id="1.20.58.1610">
    <property type="entry name" value="NADH:ubiquinone/plastoquinone oxidoreductase, chain 3"/>
    <property type="match status" value="1"/>
</dbReference>
<dbReference type="HAMAP" id="MF_01394">
    <property type="entry name" value="NDH1_NuoA"/>
    <property type="match status" value="1"/>
</dbReference>
<dbReference type="InterPro" id="IPR023043">
    <property type="entry name" value="NAD(P)H_OxRDtase_bac/plastid"/>
</dbReference>
<dbReference type="InterPro" id="IPR000440">
    <property type="entry name" value="NADH_UbQ/plastoQ_OxRdtase_su3"/>
</dbReference>
<dbReference type="InterPro" id="IPR038430">
    <property type="entry name" value="NDAH_ubi_oxred_su3_sf"/>
</dbReference>
<dbReference type="PANTHER" id="PTHR11058:SF21">
    <property type="entry name" value="NADH-QUINONE OXIDOREDUCTASE SUBUNIT A"/>
    <property type="match status" value="1"/>
</dbReference>
<dbReference type="PANTHER" id="PTHR11058">
    <property type="entry name" value="NADH-UBIQUINONE OXIDOREDUCTASE CHAIN 3"/>
    <property type="match status" value="1"/>
</dbReference>
<dbReference type="Pfam" id="PF00507">
    <property type="entry name" value="Oxidored_q4"/>
    <property type="match status" value="1"/>
</dbReference>